<evidence type="ECO:0000255" key="1">
    <source>
        <dbReference type="HAMAP-Rule" id="MF_01341"/>
    </source>
</evidence>
<evidence type="ECO:0000256" key="2">
    <source>
        <dbReference type="SAM" id="MobiDB-lite"/>
    </source>
</evidence>
<evidence type="ECO:0000305" key="3"/>
<dbReference type="EMBL" id="CP000510">
    <property type="protein sequence ID" value="ABM05188.1"/>
    <property type="molecule type" value="Genomic_DNA"/>
</dbReference>
<dbReference type="RefSeq" id="WP_011771736.1">
    <property type="nucleotide sequence ID" value="NC_008709.1"/>
</dbReference>
<dbReference type="SMR" id="A1T0C3"/>
<dbReference type="STRING" id="357804.Ping_3505"/>
<dbReference type="KEGG" id="pin:Ping_3505"/>
<dbReference type="eggNOG" id="COG0200">
    <property type="taxonomic scope" value="Bacteria"/>
</dbReference>
<dbReference type="HOGENOM" id="CLU_055188_4_2_6"/>
<dbReference type="OrthoDB" id="9810293at2"/>
<dbReference type="Proteomes" id="UP000000639">
    <property type="component" value="Chromosome"/>
</dbReference>
<dbReference type="GO" id="GO:0022625">
    <property type="term" value="C:cytosolic large ribosomal subunit"/>
    <property type="evidence" value="ECO:0007669"/>
    <property type="project" value="TreeGrafter"/>
</dbReference>
<dbReference type="GO" id="GO:0019843">
    <property type="term" value="F:rRNA binding"/>
    <property type="evidence" value="ECO:0007669"/>
    <property type="project" value="UniProtKB-UniRule"/>
</dbReference>
<dbReference type="GO" id="GO:0003735">
    <property type="term" value="F:structural constituent of ribosome"/>
    <property type="evidence" value="ECO:0007669"/>
    <property type="project" value="InterPro"/>
</dbReference>
<dbReference type="GO" id="GO:0006412">
    <property type="term" value="P:translation"/>
    <property type="evidence" value="ECO:0007669"/>
    <property type="project" value="UniProtKB-UniRule"/>
</dbReference>
<dbReference type="Gene3D" id="3.100.10.10">
    <property type="match status" value="1"/>
</dbReference>
<dbReference type="HAMAP" id="MF_01341">
    <property type="entry name" value="Ribosomal_uL15"/>
    <property type="match status" value="1"/>
</dbReference>
<dbReference type="InterPro" id="IPR030878">
    <property type="entry name" value="Ribosomal_uL15"/>
</dbReference>
<dbReference type="InterPro" id="IPR021131">
    <property type="entry name" value="Ribosomal_uL15/eL18"/>
</dbReference>
<dbReference type="InterPro" id="IPR036227">
    <property type="entry name" value="Ribosomal_uL15/eL18_sf"/>
</dbReference>
<dbReference type="InterPro" id="IPR005749">
    <property type="entry name" value="Ribosomal_uL15_bac-type"/>
</dbReference>
<dbReference type="InterPro" id="IPR001196">
    <property type="entry name" value="Ribosomal_uL15_CS"/>
</dbReference>
<dbReference type="NCBIfam" id="TIGR01071">
    <property type="entry name" value="rplO_bact"/>
    <property type="match status" value="1"/>
</dbReference>
<dbReference type="PANTHER" id="PTHR12934">
    <property type="entry name" value="50S RIBOSOMAL PROTEIN L15"/>
    <property type="match status" value="1"/>
</dbReference>
<dbReference type="PANTHER" id="PTHR12934:SF11">
    <property type="entry name" value="LARGE RIBOSOMAL SUBUNIT PROTEIN UL15M"/>
    <property type="match status" value="1"/>
</dbReference>
<dbReference type="Pfam" id="PF00828">
    <property type="entry name" value="Ribosomal_L27A"/>
    <property type="match status" value="1"/>
</dbReference>
<dbReference type="SUPFAM" id="SSF52080">
    <property type="entry name" value="Ribosomal proteins L15p and L18e"/>
    <property type="match status" value="1"/>
</dbReference>
<dbReference type="PROSITE" id="PS00475">
    <property type="entry name" value="RIBOSOMAL_L15"/>
    <property type="match status" value="1"/>
</dbReference>
<proteinExistence type="inferred from homology"/>
<keyword id="KW-1185">Reference proteome</keyword>
<keyword id="KW-0687">Ribonucleoprotein</keyword>
<keyword id="KW-0689">Ribosomal protein</keyword>
<keyword id="KW-0694">RNA-binding</keyword>
<keyword id="KW-0699">rRNA-binding</keyword>
<name>RL15_PSYIN</name>
<gene>
    <name evidence="1" type="primary">rplO</name>
    <name type="ordered locus">Ping_3505</name>
</gene>
<reference key="1">
    <citation type="journal article" date="2008" name="BMC Genomics">
        <title>Genomics of an extreme psychrophile, Psychromonas ingrahamii.</title>
        <authorList>
            <person name="Riley M."/>
            <person name="Staley J.T."/>
            <person name="Danchin A."/>
            <person name="Wang T.Z."/>
            <person name="Brettin T.S."/>
            <person name="Hauser L.J."/>
            <person name="Land M.L."/>
            <person name="Thompson L.S."/>
        </authorList>
    </citation>
    <scope>NUCLEOTIDE SEQUENCE [LARGE SCALE GENOMIC DNA]</scope>
    <source>
        <strain>DSM 17664 / CCUG 51855 / 37</strain>
    </source>
</reference>
<organism>
    <name type="scientific">Psychromonas ingrahamii (strain DSM 17664 / CCUG 51855 / 37)</name>
    <dbReference type="NCBI Taxonomy" id="357804"/>
    <lineage>
        <taxon>Bacteria</taxon>
        <taxon>Pseudomonadati</taxon>
        <taxon>Pseudomonadota</taxon>
        <taxon>Gammaproteobacteria</taxon>
        <taxon>Alteromonadales</taxon>
        <taxon>Psychromonadaceae</taxon>
        <taxon>Psychromonas</taxon>
    </lineage>
</organism>
<accession>A1T0C3</accession>
<protein>
    <recommendedName>
        <fullName evidence="1">Large ribosomal subunit protein uL15</fullName>
    </recommendedName>
    <alternativeName>
        <fullName evidence="3">50S ribosomal protein L15</fullName>
    </alternativeName>
</protein>
<comment type="function">
    <text evidence="1">Binds to the 23S rRNA.</text>
</comment>
<comment type="subunit">
    <text evidence="1">Part of the 50S ribosomal subunit.</text>
</comment>
<comment type="similarity">
    <text evidence="1">Belongs to the universal ribosomal protein uL15 family.</text>
</comment>
<sequence length="144" mass="14931">MKLNTLSPAAGAKHAAKRVGRGIGSGLGKTAGRGHKGQKSRSGGSIRPGFEGGQMPLKQRLPKFGFTSRKSLVSGEVRLNEIAKVDGDVVTIETLKQAGLLVNTVKFAKVVLSGEISRSVTVQGLRVTKGARAAIEAAGGKIEE</sequence>
<feature type="chain" id="PRO_1000054523" description="Large ribosomal subunit protein uL15">
    <location>
        <begin position="1"/>
        <end position="144"/>
    </location>
</feature>
<feature type="region of interest" description="Disordered" evidence="2">
    <location>
        <begin position="1"/>
        <end position="58"/>
    </location>
</feature>
<feature type="compositionally biased region" description="Gly residues" evidence="2">
    <location>
        <begin position="21"/>
        <end position="31"/>
    </location>
</feature>